<dbReference type="EC" id="5.3.3.2" evidence="1"/>
<dbReference type="EMBL" id="AE017354">
    <property type="protein sequence ID" value="AAU28120.1"/>
    <property type="molecule type" value="Genomic_DNA"/>
</dbReference>
<dbReference type="RefSeq" id="WP_010947767.1">
    <property type="nucleotide sequence ID" value="NC_002942.5"/>
</dbReference>
<dbReference type="RefSeq" id="YP_096067.1">
    <property type="nucleotide sequence ID" value="NC_002942.5"/>
</dbReference>
<dbReference type="SMR" id="Q5ZTV7"/>
<dbReference type="STRING" id="272624.lpg2051"/>
<dbReference type="PaxDb" id="272624-lpg2051"/>
<dbReference type="GeneID" id="57036045"/>
<dbReference type="KEGG" id="lpn:lpg2051"/>
<dbReference type="PATRIC" id="fig|272624.6.peg.2148"/>
<dbReference type="eggNOG" id="COG1304">
    <property type="taxonomic scope" value="Bacteria"/>
</dbReference>
<dbReference type="HOGENOM" id="CLU_065515_1_0_6"/>
<dbReference type="OrthoDB" id="9795032at2"/>
<dbReference type="Proteomes" id="UP000000609">
    <property type="component" value="Chromosome"/>
</dbReference>
<dbReference type="GO" id="GO:0005737">
    <property type="term" value="C:cytoplasm"/>
    <property type="evidence" value="ECO:0007669"/>
    <property type="project" value="UniProtKB-SubCell"/>
</dbReference>
<dbReference type="GO" id="GO:0010181">
    <property type="term" value="F:FMN binding"/>
    <property type="evidence" value="ECO:0007669"/>
    <property type="project" value="UniProtKB-UniRule"/>
</dbReference>
<dbReference type="GO" id="GO:0004452">
    <property type="term" value="F:isopentenyl-diphosphate delta-isomerase activity"/>
    <property type="evidence" value="ECO:0007669"/>
    <property type="project" value="UniProtKB-UniRule"/>
</dbReference>
<dbReference type="GO" id="GO:0000287">
    <property type="term" value="F:magnesium ion binding"/>
    <property type="evidence" value="ECO:0007669"/>
    <property type="project" value="UniProtKB-UniRule"/>
</dbReference>
<dbReference type="GO" id="GO:0070402">
    <property type="term" value="F:NADPH binding"/>
    <property type="evidence" value="ECO:0007669"/>
    <property type="project" value="UniProtKB-UniRule"/>
</dbReference>
<dbReference type="GO" id="GO:0016491">
    <property type="term" value="F:oxidoreductase activity"/>
    <property type="evidence" value="ECO:0007669"/>
    <property type="project" value="InterPro"/>
</dbReference>
<dbReference type="GO" id="GO:0008299">
    <property type="term" value="P:isoprenoid biosynthetic process"/>
    <property type="evidence" value="ECO:0007669"/>
    <property type="project" value="UniProtKB-UniRule"/>
</dbReference>
<dbReference type="CDD" id="cd02811">
    <property type="entry name" value="IDI-2_FMN"/>
    <property type="match status" value="1"/>
</dbReference>
<dbReference type="Gene3D" id="3.20.20.70">
    <property type="entry name" value="Aldolase class I"/>
    <property type="match status" value="1"/>
</dbReference>
<dbReference type="HAMAP" id="MF_00354">
    <property type="entry name" value="Idi_2"/>
    <property type="match status" value="1"/>
</dbReference>
<dbReference type="InterPro" id="IPR013785">
    <property type="entry name" value="Aldolase_TIM"/>
</dbReference>
<dbReference type="InterPro" id="IPR000262">
    <property type="entry name" value="FMN-dep_DH"/>
</dbReference>
<dbReference type="InterPro" id="IPR011179">
    <property type="entry name" value="IPdP_isomerase"/>
</dbReference>
<dbReference type="NCBIfam" id="TIGR02151">
    <property type="entry name" value="IPP_isom_2"/>
    <property type="match status" value="1"/>
</dbReference>
<dbReference type="PANTHER" id="PTHR43665">
    <property type="entry name" value="ISOPENTENYL-DIPHOSPHATE DELTA-ISOMERASE"/>
    <property type="match status" value="1"/>
</dbReference>
<dbReference type="PANTHER" id="PTHR43665:SF1">
    <property type="entry name" value="ISOPENTENYL-DIPHOSPHATE DELTA-ISOMERASE"/>
    <property type="match status" value="1"/>
</dbReference>
<dbReference type="Pfam" id="PF01070">
    <property type="entry name" value="FMN_dh"/>
    <property type="match status" value="1"/>
</dbReference>
<dbReference type="PIRSF" id="PIRSF003314">
    <property type="entry name" value="IPP_isomerase"/>
    <property type="match status" value="1"/>
</dbReference>
<dbReference type="SUPFAM" id="SSF51395">
    <property type="entry name" value="FMN-linked oxidoreductases"/>
    <property type="match status" value="1"/>
</dbReference>
<organism>
    <name type="scientific">Legionella pneumophila subsp. pneumophila (strain Philadelphia 1 / ATCC 33152 / DSM 7513)</name>
    <dbReference type="NCBI Taxonomy" id="272624"/>
    <lineage>
        <taxon>Bacteria</taxon>
        <taxon>Pseudomonadati</taxon>
        <taxon>Pseudomonadota</taxon>
        <taxon>Gammaproteobacteria</taxon>
        <taxon>Legionellales</taxon>
        <taxon>Legionellaceae</taxon>
        <taxon>Legionella</taxon>
    </lineage>
</organism>
<keyword id="KW-0963">Cytoplasm</keyword>
<keyword id="KW-0285">Flavoprotein</keyword>
<keyword id="KW-0288">FMN</keyword>
<keyword id="KW-0413">Isomerase</keyword>
<keyword id="KW-0414">Isoprene biosynthesis</keyword>
<keyword id="KW-0460">Magnesium</keyword>
<keyword id="KW-0479">Metal-binding</keyword>
<keyword id="KW-0521">NADP</keyword>
<keyword id="KW-1185">Reference proteome</keyword>
<gene>
    <name evidence="1" type="primary">fni</name>
    <name type="ordered locus">lpg2051</name>
</gene>
<comment type="function">
    <text evidence="1">Involved in the biosynthesis of isoprenoids. Catalyzes the 1,3-allylic rearrangement of the homoallylic substrate isopentenyl (IPP) to its allylic isomer, dimethylallyl diphosphate (DMAPP).</text>
</comment>
<comment type="catalytic activity">
    <reaction evidence="1">
        <text>isopentenyl diphosphate = dimethylallyl diphosphate</text>
        <dbReference type="Rhea" id="RHEA:23284"/>
        <dbReference type="ChEBI" id="CHEBI:57623"/>
        <dbReference type="ChEBI" id="CHEBI:128769"/>
        <dbReference type="EC" id="5.3.3.2"/>
    </reaction>
</comment>
<comment type="cofactor">
    <cofactor evidence="1">
        <name>FMN</name>
        <dbReference type="ChEBI" id="CHEBI:58210"/>
    </cofactor>
</comment>
<comment type="cofactor">
    <cofactor evidence="1">
        <name>NADPH</name>
        <dbReference type="ChEBI" id="CHEBI:57783"/>
    </cofactor>
</comment>
<comment type="cofactor">
    <cofactor evidence="1">
        <name>Mg(2+)</name>
        <dbReference type="ChEBI" id="CHEBI:18420"/>
    </cofactor>
</comment>
<comment type="subunit">
    <text evidence="1">Homooctamer. Dimer of tetramers.</text>
</comment>
<comment type="subcellular location">
    <subcellularLocation>
        <location evidence="1">Cytoplasm</location>
    </subcellularLocation>
</comment>
<comment type="similarity">
    <text evidence="1">Belongs to the IPP isomerase type 2 family.</text>
</comment>
<accession>Q5ZTV7</accession>
<reference key="1">
    <citation type="journal article" date="2004" name="Science">
        <title>The genomic sequence of the accidental pathogen Legionella pneumophila.</title>
        <authorList>
            <person name="Chien M."/>
            <person name="Morozova I."/>
            <person name="Shi S."/>
            <person name="Sheng H."/>
            <person name="Chen J."/>
            <person name="Gomez S.M."/>
            <person name="Asamani G."/>
            <person name="Hill K."/>
            <person name="Nuara J."/>
            <person name="Feder M."/>
            <person name="Rineer J."/>
            <person name="Greenberg J.J."/>
            <person name="Steshenko V."/>
            <person name="Park S.H."/>
            <person name="Zhao B."/>
            <person name="Teplitskaya E."/>
            <person name="Edwards J.R."/>
            <person name="Pampou S."/>
            <person name="Georghiou A."/>
            <person name="Chou I.-C."/>
            <person name="Iannuccilli W."/>
            <person name="Ulz M.E."/>
            <person name="Kim D.H."/>
            <person name="Geringer-Sameth A."/>
            <person name="Goldsberry C."/>
            <person name="Morozov P."/>
            <person name="Fischer S.G."/>
            <person name="Segal G."/>
            <person name="Qu X."/>
            <person name="Rzhetsky A."/>
            <person name="Zhang P."/>
            <person name="Cayanis E."/>
            <person name="De Jong P.J."/>
            <person name="Ju J."/>
            <person name="Kalachikov S."/>
            <person name="Shuman H.A."/>
            <person name="Russo J.J."/>
        </authorList>
    </citation>
    <scope>NUCLEOTIDE SEQUENCE [LARGE SCALE GENOMIC DNA]</scope>
    <source>
        <strain>Philadelphia 1 / ATCC 33152 / DSM 7513</strain>
    </source>
</reference>
<sequence>MQNEYSQFEQRKRDHIELALMPANQSSELNPFDHFSLVHEALPDLDFKDISIQSIRFKKPVEKPFIISSMTAGHSNALEINYRLMEACSKTKWAMGVGSQRRELTDKQAAFEWTPLRRDFPMVSLFSNLGIAQLIDTPISAIQRLIDTLQAEALIIHCNPLQECIQPEGTTNFQGCWTALEALVKKIASPVIIKETGCGFSKNTLLRLNNIGVAAVEISGVGGTHWGRIEGHRANKDPIRQRTADTFRNWGIDTLQSTRNAISLNPSFEIWGSGGVRNGLDAAKLFALGATTVGFAKPMLEAALGSTGQVLTQMNTIEYELKTAMFCTGSRVLDDLKEKACP</sequence>
<evidence type="ECO:0000255" key="1">
    <source>
        <dbReference type="HAMAP-Rule" id="MF_00354"/>
    </source>
</evidence>
<proteinExistence type="inferred from homology"/>
<name>IDI2_LEGPH</name>
<protein>
    <recommendedName>
        <fullName evidence="1">Isopentenyl-diphosphate delta-isomerase</fullName>
        <shortName evidence="1">IPP isomerase</shortName>
        <ecNumber evidence="1">5.3.3.2</ecNumber>
    </recommendedName>
    <alternativeName>
        <fullName evidence="1">Isopentenyl diphosphate:dimethylallyl diphosphate isomerase</fullName>
    </alternativeName>
    <alternativeName>
        <fullName evidence="1">Isopentenyl pyrophosphate isomerase</fullName>
    </alternativeName>
    <alternativeName>
        <fullName evidence="1">Type 2 isopentenyl diphosphate isomerase</fullName>
        <shortName evidence="1">IDI-2</shortName>
    </alternativeName>
</protein>
<feature type="chain" id="PRO_1000048443" description="Isopentenyl-diphosphate delta-isomerase">
    <location>
        <begin position="1"/>
        <end position="342"/>
    </location>
</feature>
<feature type="binding site" evidence="1">
    <location>
        <begin position="11"/>
        <end position="12"/>
    </location>
    <ligand>
        <name>substrate</name>
    </ligand>
</feature>
<feature type="binding site" evidence="1">
    <location>
        <position position="68"/>
    </location>
    <ligand>
        <name>FMN</name>
        <dbReference type="ChEBI" id="CHEBI:58210"/>
    </ligand>
</feature>
<feature type="binding site" evidence="1">
    <location>
        <begin position="69"/>
        <end position="71"/>
    </location>
    <ligand>
        <name>FMN</name>
        <dbReference type="ChEBI" id="CHEBI:58210"/>
    </ligand>
</feature>
<feature type="binding site" evidence="1">
    <location>
        <begin position="99"/>
        <end position="101"/>
    </location>
    <ligand>
        <name>substrate</name>
    </ligand>
</feature>
<feature type="binding site" evidence="1">
    <location>
        <position position="99"/>
    </location>
    <ligand>
        <name>FMN</name>
        <dbReference type="ChEBI" id="CHEBI:58210"/>
    </ligand>
</feature>
<feature type="binding site" evidence="1">
    <location>
        <position position="128"/>
    </location>
    <ligand>
        <name>FMN</name>
        <dbReference type="ChEBI" id="CHEBI:58210"/>
    </ligand>
</feature>
<feature type="binding site" evidence="1">
    <location>
        <position position="162"/>
    </location>
    <ligand>
        <name>substrate</name>
    </ligand>
</feature>
<feature type="binding site" evidence="1">
    <location>
        <position position="163"/>
    </location>
    <ligand>
        <name>Mg(2+)</name>
        <dbReference type="ChEBI" id="CHEBI:18420"/>
    </ligand>
</feature>
<feature type="binding site" evidence="1">
    <location>
        <position position="194"/>
    </location>
    <ligand>
        <name>FMN</name>
        <dbReference type="ChEBI" id="CHEBI:58210"/>
    </ligand>
</feature>
<feature type="binding site" evidence="1">
    <location>
        <position position="219"/>
    </location>
    <ligand>
        <name>FMN</name>
        <dbReference type="ChEBI" id="CHEBI:58210"/>
    </ligand>
</feature>
<feature type="binding site" evidence="1">
    <location>
        <position position="224"/>
    </location>
    <ligand>
        <name>FMN</name>
        <dbReference type="ChEBI" id="CHEBI:58210"/>
    </ligand>
</feature>
<feature type="binding site" evidence="1">
    <location>
        <begin position="275"/>
        <end position="277"/>
    </location>
    <ligand>
        <name>FMN</name>
        <dbReference type="ChEBI" id="CHEBI:58210"/>
    </ligand>
</feature>
<feature type="binding site" evidence="1">
    <location>
        <begin position="296"/>
        <end position="297"/>
    </location>
    <ligand>
        <name>FMN</name>
        <dbReference type="ChEBI" id="CHEBI:58210"/>
    </ligand>
</feature>